<organism>
    <name type="scientific">Human herpesvirus 7 (strain JI)</name>
    <name type="common">HHV-7</name>
    <name type="synonym">Human T lymphotropic virus</name>
    <dbReference type="NCBI Taxonomy" id="57278"/>
    <lineage>
        <taxon>Viruses</taxon>
        <taxon>Duplodnaviria</taxon>
        <taxon>Heunggongvirae</taxon>
        <taxon>Peploviricota</taxon>
        <taxon>Herviviricetes</taxon>
        <taxon>Herpesvirales</taxon>
        <taxon>Orthoherpesviridae</taxon>
        <taxon>Betaherpesvirinae</taxon>
        <taxon>Roseolovirus</taxon>
        <taxon>Roseolovirus humanbeta7</taxon>
        <taxon>Human betaherpesvirus 7</taxon>
    </lineage>
</organism>
<organismHost>
    <name type="scientific">Homo sapiens</name>
    <name type="common">Human</name>
    <dbReference type="NCBI Taxonomy" id="9606"/>
</organismHost>
<name>HEPA_HHV7J</name>
<keyword id="KW-0235">DNA replication</keyword>
<keyword id="KW-1048">Host nucleus</keyword>
<keyword id="KW-1185">Reference proteome</keyword>
<comment type="function">
    <text evidence="1">Component of the helicase/primase complex. Unwinds the DNA at the replication forks and generates single-stranded DNA for both leading and lagging strand synthesis. The primase synthesizes short RNA primers on the lagging strand that the polymerase presumably elongates using dNTPs. The primase-associated factor has no known catalytic activity in the complex and may serve to facilitate the formation of the replisome by directly interacting with the origin-binding protein and the polymerase.</text>
</comment>
<comment type="subunit">
    <text evidence="1">Associates with the primase and the helicase to form the helicase-primase complex. Interacts with the origin-binding protein. Interacts with the polymerase catalytic subunit.</text>
</comment>
<comment type="subcellular location">
    <subcellularLocation>
        <location evidence="1">Host nucleus</location>
    </subcellularLocation>
</comment>
<comment type="similarity">
    <text evidence="1">Belongs to the herpesviridae HEPA family.</text>
</comment>
<evidence type="ECO:0000255" key="1">
    <source>
        <dbReference type="HAMAP-Rule" id="MF_04010"/>
    </source>
</evidence>
<reference key="1">
    <citation type="journal article" date="1996" name="J. Virol.">
        <title>Determination and analysis of the complete nucleotide sequence of human herpesvirus.</title>
        <authorList>
            <person name="Nicholas J."/>
        </authorList>
    </citation>
    <scope>NUCLEOTIDE SEQUENCE [LARGE SCALE GENOMIC DNA]</scope>
</reference>
<proteinExistence type="inferred from homology"/>
<accession>P52376</accession>
<protein>
    <recommendedName>
        <fullName evidence="1">DNA helicase/primase complex-associated protein</fullName>
        <shortName evidence="1">HEPA</shortName>
    </recommendedName>
    <alternativeName>
        <fullName evidence="1">Primase-associated factor</fullName>
    </alternativeName>
</protein>
<sequence>MQMRGCVCHLGVYCVHNDWKNKQYRVPIYQCLFFNAETHSLHTFLVIGNEISENLLDKISISKEKIFMWDLNEQIMSITQKTESICELMFGNKQIIQKLSRTFIFLTIILNSNMYEIIDVCIDSNAVLYMPDLRPMIIRCVGNYSKISSELLSDSDCTQATKKMRFDYHVTNFCFSLNVNGKKVLFSSTESSESILEKLLEFFTIQTYKLAEEQFLMVTPKNFFTVLFDEDMCLLLLQTVVSFLYDNLFRNKLVVKQVHDYIGPDLWPQGHERAVYFVGFPNMWFLSIYDLDNKIPCIKNICNRILLYCGLPDSLGPDGCQSVPSTQCVDEFEDLPNLGALQYLKYNSLVVTMETVENSENVYYFFGEQDLFIVKLVDIIQSLLELYVPKSFLPDFSDAYIKSEILLKFISRLHKKSNNIFCKIVKKITEFLRCFLNACRLMDLNWMFIRNMHIVYFIGPKKDPSVVLPLLKTSVESCWKKILNSSRTPVVNINYIPGYNFLHSSCSFLTSGDINSEDSHWTITASKCLYNCLGASQITVDFKNIYTNFQQMVSVFLSHRYENKYWIEYFEPNNYFLETHEGLLDCNRYTAVWTTENKLIRQSVGYPLTDKIDFIHYIQVVIEIFKKWLLTKYSQQEYAETVRLGSKIISDHLHLFNVN</sequence>
<feature type="chain" id="PRO_0000115863" description="DNA helicase/primase complex-associated protein">
    <location>
        <begin position="1"/>
        <end position="659"/>
    </location>
</feature>
<gene>
    <name type="primary">U74</name>
</gene>
<dbReference type="EMBL" id="U43400">
    <property type="protein sequence ID" value="AAC54735.1"/>
    <property type="molecule type" value="Genomic_DNA"/>
</dbReference>
<dbReference type="PIR" id="T41975">
    <property type="entry name" value="T41975"/>
</dbReference>
<dbReference type="RefSeq" id="YP_073814.1">
    <property type="nucleotide sequence ID" value="NC_001716.2"/>
</dbReference>
<dbReference type="SMR" id="P52376"/>
<dbReference type="DNASU" id="3289532"/>
<dbReference type="GeneID" id="3289532"/>
<dbReference type="KEGG" id="vg:3289532"/>
<dbReference type="Proteomes" id="UP000009246">
    <property type="component" value="Segment"/>
</dbReference>
<dbReference type="GO" id="GO:0042025">
    <property type="term" value="C:host cell nucleus"/>
    <property type="evidence" value="ECO:0007669"/>
    <property type="project" value="UniProtKB-SubCell"/>
</dbReference>
<dbReference type="GO" id="GO:0006260">
    <property type="term" value="P:DNA replication"/>
    <property type="evidence" value="ECO:0007669"/>
    <property type="project" value="UniProtKB-KW"/>
</dbReference>
<dbReference type="GO" id="GO:0019079">
    <property type="term" value="P:viral genome replication"/>
    <property type="evidence" value="ECO:0007669"/>
    <property type="project" value="InterPro"/>
</dbReference>
<dbReference type="HAMAP" id="MF_04010">
    <property type="entry name" value="HSV_HEPA"/>
    <property type="match status" value="1"/>
</dbReference>
<dbReference type="InterPro" id="IPR004996">
    <property type="entry name" value="HSV_HEPA"/>
</dbReference>
<dbReference type="Pfam" id="PF03324">
    <property type="entry name" value="Herpes_HEPA"/>
    <property type="match status" value="1"/>
</dbReference>